<comment type="function">
    <text evidence="3 4 5 7">Retinol dehydrogenase with a clear preference for NADP. Displays high activity towards 9-cis, 11-cis and all-trans-retinol, and to a lesser extent on 13-cis-retinol (PubMed:12036956, PubMed:12226107, PubMed:29410696). Exhibits a low reductive activity towards unsaturated medium-chain aldehydes such as cis -6-nonenal and no activity toward nonanal or 4-hydroxy-nonenal (PubMed:15865448). Has no dehydrogenase activity towards steroid (PubMed:12036956, PubMed:12226107).</text>
</comment>
<comment type="catalytic activity">
    <reaction evidence="3 4 7">
        <text>all-trans-retinol + NADP(+) = all-trans-retinal + NADPH + H(+)</text>
        <dbReference type="Rhea" id="RHEA:25033"/>
        <dbReference type="ChEBI" id="CHEBI:15378"/>
        <dbReference type="ChEBI" id="CHEBI:17336"/>
        <dbReference type="ChEBI" id="CHEBI:17898"/>
        <dbReference type="ChEBI" id="CHEBI:57783"/>
        <dbReference type="ChEBI" id="CHEBI:58349"/>
        <dbReference type="EC" id="1.1.1.300"/>
    </reaction>
</comment>
<comment type="catalytic activity">
    <reaction evidence="3 4">
        <text>11-cis-retinol + NADP(+) = 11-cis-retinal + NADPH + H(+)</text>
        <dbReference type="Rhea" id="RHEA:54912"/>
        <dbReference type="ChEBI" id="CHEBI:15378"/>
        <dbReference type="ChEBI" id="CHEBI:16066"/>
        <dbReference type="ChEBI" id="CHEBI:16302"/>
        <dbReference type="ChEBI" id="CHEBI:57783"/>
        <dbReference type="ChEBI" id="CHEBI:58349"/>
    </reaction>
</comment>
<comment type="catalytic activity">
    <reaction evidence="3 4">
        <text>9-cis-retinol + NADP(+) = 9-cis-retinal + NADPH + H(+)</text>
        <dbReference type="Rhea" id="RHEA:54916"/>
        <dbReference type="ChEBI" id="CHEBI:15378"/>
        <dbReference type="ChEBI" id="CHEBI:57783"/>
        <dbReference type="ChEBI" id="CHEBI:58349"/>
        <dbReference type="ChEBI" id="CHEBI:78272"/>
        <dbReference type="ChEBI" id="CHEBI:78273"/>
    </reaction>
</comment>
<comment type="catalytic activity">
    <reaction evidence="3 4">
        <text>13-cis-retinol + NADP(+) = 13-cis-retinal + NADPH + H(+)</text>
        <dbReference type="Rhea" id="RHEA:54920"/>
        <dbReference type="ChEBI" id="CHEBI:15378"/>
        <dbReference type="ChEBI" id="CHEBI:45479"/>
        <dbReference type="ChEBI" id="CHEBI:45487"/>
        <dbReference type="ChEBI" id="CHEBI:57783"/>
        <dbReference type="ChEBI" id="CHEBI:58349"/>
    </reaction>
</comment>
<comment type="activity regulation">
    <text evidence="7">SELENOF decreases the retinol dehydrogenase activity.</text>
</comment>
<comment type="biophysicochemical properties">
    <kinetics>
        <KM evidence="3">0.23 uM for NADPH</KM>
        <KM evidence="3">0.8 uM for NADP</KM>
        <KM evidence="3">0.5 uM for all-trans-retinal</KM>
        <KM evidence="3">0.62 uM for 13-cis-retinal</KM>
        <KM evidence="3">0.19 uM for 9-cis-retinal</KM>
        <KM evidence="3">1.3 uM for all-trans-retinol</KM>
        <KM evidence="5">5 uM for (Z)-non-6-enol</KM>
        <Vmax evidence="3">18.0 nmol/min/mg enzyme with all-trans-retinal as substrate</Vmax>
        <Vmax evidence="3">7.0 nmol/min/mg enzyme with 13-cis-retinal as substrate</Vmax>
        <Vmax evidence="3">1.6 nmol/min/mg enzyme with 9-cis-retinal as substrate</Vmax>
        <Vmax evidence="3">0.95 nmol/min/mg enzyme with all-trans-retinol as substrate</Vmax>
        <Vmax evidence="5">19.0 nmol/min/mg enzyme with (Z)-non-6-enol</Vmax>
        <text>Vmax is measured per mg microsomal protein.</text>
    </kinetics>
</comment>
<comment type="pathway">
    <text evidence="3 4">Cofactor metabolism; retinol metabolism.</text>
</comment>
<comment type="subunit">
    <text evidence="7">Interacts with SELENOF.</text>
</comment>
<comment type="interaction">
    <interactant intactId="EBI-2823756">
        <id>Q8TC12</id>
    </interactant>
    <interactant intactId="EBI-1052797">
        <id>O60613</id>
        <label>SELENOF</label>
    </interactant>
    <organismsDiffer>false</organismsDiffer>
    <experiments>5</experiments>
</comment>
<comment type="interaction">
    <interactant intactId="EBI-2823756">
        <id>Q8TC12</id>
    </interactant>
    <interactant intactId="EBI-749370">
        <id>Q9BSL1</id>
        <label>UBAC1</label>
    </interactant>
    <organismsDiffer>false</organismsDiffer>
    <experiments>2</experiments>
</comment>
<comment type="subcellular location">
    <subcellularLocation>
        <location evidence="3">Endoplasmic reticulum membrane</location>
        <topology evidence="3">Single-pass type II membrane protein</topology>
    </subcellularLocation>
</comment>
<comment type="alternative products">
    <event type="alternative splicing"/>
    <isoform>
        <id>Q8TC12-1</id>
        <name>1</name>
        <sequence type="displayed"/>
    </isoform>
    <isoform>
        <id>Q8TC12-2</id>
        <name>2</name>
        <sequence type="described" ref="VSP_008159"/>
    </isoform>
    <isoform>
        <id>Q8TC12-3</id>
        <name>3</name>
        <sequence type="described" ref="VSP_046403"/>
    </isoform>
</comment>
<comment type="tissue specificity">
    <text evidence="2">Predominantly expressed in the epithelial cells of prostate, in both basal and luminal secretory cell populations. Expressed at low levels in spleen, thymus, testis, ovary, small intestine, colon, peripherical blood leukocytes, kidney, adrenal gland and fetal liver. Not detected in prostatic fibromuscular stromal cells, endothelial cells, or infiltrating lymphocytes.</text>
</comment>
<comment type="induction">
    <text evidence="2">By androgens in prostate cancer cells.</text>
</comment>
<comment type="PTM">
    <text evidence="2">Not glycosylated.</text>
</comment>
<comment type="disease" evidence="6">
    <disease id="DI-04303">
        <name>Retinal dystrophy, juvenile cataracts, and short stature syndrome</name>
        <acronym>RDJCSS</acronym>
        <description>A disorder characterized by retinal dystrophy resulting in progressive decrease in visual acuity and difficulties with night vision in the first decade of life, development of juvenile cataracts, facial dysmorphism, psychomotor developmental delays, learning disabilities and short stature. Ophthalmological findings include salt-and-pepper retinopathy, attenuation of the arterioles, generalized rod-cone dysfunction, mottled macula at an early age, and peripapillary sparing of the retinal pigment epithelium.</description>
        <dbReference type="MIM" id="616108"/>
    </disease>
    <text>The disease is caused by variants affecting the gene represented in this entry.</text>
</comment>
<comment type="miscellaneous">
    <text evidence="4">Shows clear specificity for the pro-S hydrogen on C4 of NADPH and the pro-R hydrogen on C15 of retinols.</text>
</comment>
<comment type="similarity">
    <text evidence="12">Belongs to the short-chain dehydrogenases/reductases (SDR) family.</text>
</comment>
<comment type="caution">
    <text evidence="5">In contrast to mouse, human RDH11 exhibits little or no activity towards toxic lipid peroxidation products, such as nonanal or 4-hydroxy-nonenal.</text>
</comment>
<proteinExistence type="evidence at protein level"/>
<reference key="1">
    <citation type="journal article" date="2001" name="Cancer Res.">
        <title>Prostate short-chain dehydrogenase reductase 1 (PSDR1): a new member of the short-chain steroid dehydrogenase/reductase family highly expressed in normal and neoplastic prostate epithelium.</title>
        <authorList>
            <person name="Lin B."/>
            <person name="White J.T."/>
            <person name="Ferguson C."/>
            <person name="Wang S."/>
            <person name="Vessella R."/>
            <person name="Bumgarner R."/>
            <person name="True L.D."/>
            <person name="Hood L."/>
            <person name="Nelson P.S."/>
        </authorList>
    </citation>
    <scope>NUCLEOTIDE SEQUENCE [MRNA] (ISOFORM 1)</scope>
    <scope>INDUCTION</scope>
    <scope>TISSUE SPECIFICITY</scope>
    <source>
        <tissue>Prostate</tissue>
    </source>
</reference>
<reference key="2">
    <citation type="submission" date="2001-06" db="EMBL/GenBank/DDBJ databases">
        <title>Screening of HCV core binding protein from human liver cDNA library by using yeast two hybrid system.</title>
        <authorList>
            <person name="Li K."/>
            <person name="Wang L."/>
            <person name="Cheng J."/>
            <person name="Zhang L."/>
            <person name="Lu Y."/>
            <person name="Liu Y."/>
            <person name="Duan H."/>
        </authorList>
    </citation>
    <scope>NUCLEOTIDE SEQUENCE [MRNA] (ISOFORM 1)</scope>
    <source>
        <tissue>Liver</tissue>
    </source>
</reference>
<reference key="3">
    <citation type="journal article" date="2000" name="Genome Res.">
        <title>Identification of novel human genes evolutionarily conserved in Caenorhabditis elegans by comparative proteomics.</title>
        <authorList>
            <person name="Lai C.-H."/>
            <person name="Chou C.-Y."/>
            <person name="Ch'ang L.-Y."/>
            <person name="Liu C.-S."/>
            <person name="Lin W.-C."/>
        </authorList>
    </citation>
    <scope>NUCLEOTIDE SEQUENCE [LARGE SCALE MRNA] (ISOFORM 1)</scope>
</reference>
<reference key="4">
    <citation type="submission" date="2004-06" db="EMBL/GenBank/DDBJ databases">
        <title>Cloning of human full open reading frames in Gateway(TM) system entry vector (pDONR201).</title>
        <authorList>
            <person name="Ebert L."/>
            <person name="Schick M."/>
            <person name="Neubert P."/>
            <person name="Schatten R."/>
            <person name="Henze S."/>
            <person name="Korn B."/>
        </authorList>
    </citation>
    <scope>NUCLEOTIDE SEQUENCE [LARGE SCALE MRNA] (ISOFORM 1)</scope>
</reference>
<reference key="5">
    <citation type="journal article" date="2004" name="Nat. Genet.">
        <title>Complete sequencing and characterization of 21,243 full-length human cDNAs.</title>
        <authorList>
            <person name="Ota T."/>
            <person name="Suzuki Y."/>
            <person name="Nishikawa T."/>
            <person name="Otsuki T."/>
            <person name="Sugiyama T."/>
            <person name="Irie R."/>
            <person name="Wakamatsu A."/>
            <person name="Hayashi K."/>
            <person name="Sato H."/>
            <person name="Nagai K."/>
            <person name="Kimura K."/>
            <person name="Makita H."/>
            <person name="Sekine M."/>
            <person name="Obayashi M."/>
            <person name="Nishi T."/>
            <person name="Shibahara T."/>
            <person name="Tanaka T."/>
            <person name="Ishii S."/>
            <person name="Yamamoto J."/>
            <person name="Saito K."/>
            <person name="Kawai Y."/>
            <person name="Isono Y."/>
            <person name="Nakamura Y."/>
            <person name="Nagahari K."/>
            <person name="Murakami K."/>
            <person name="Yasuda T."/>
            <person name="Iwayanagi T."/>
            <person name="Wagatsuma M."/>
            <person name="Shiratori A."/>
            <person name="Sudo H."/>
            <person name="Hosoiri T."/>
            <person name="Kaku Y."/>
            <person name="Kodaira H."/>
            <person name="Kondo H."/>
            <person name="Sugawara M."/>
            <person name="Takahashi M."/>
            <person name="Kanda K."/>
            <person name="Yokoi T."/>
            <person name="Furuya T."/>
            <person name="Kikkawa E."/>
            <person name="Omura Y."/>
            <person name="Abe K."/>
            <person name="Kamihara K."/>
            <person name="Katsuta N."/>
            <person name="Sato K."/>
            <person name="Tanikawa M."/>
            <person name="Yamazaki M."/>
            <person name="Ninomiya K."/>
            <person name="Ishibashi T."/>
            <person name="Yamashita H."/>
            <person name="Murakawa K."/>
            <person name="Fujimori K."/>
            <person name="Tanai H."/>
            <person name="Kimata M."/>
            <person name="Watanabe M."/>
            <person name="Hiraoka S."/>
            <person name="Chiba Y."/>
            <person name="Ishida S."/>
            <person name="Ono Y."/>
            <person name="Takiguchi S."/>
            <person name="Watanabe S."/>
            <person name="Yosida M."/>
            <person name="Hotuta T."/>
            <person name="Kusano J."/>
            <person name="Kanehori K."/>
            <person name="Takahashi-Fujii A."/>
            <person name="Hara H."/>
            <person name="Tanase T.-O."/>
            <person name="Nomura Y."/>
            <person name="Togiya S."/>
            <person name="Komai F."/>
            <person name="Hara R."/>
            <person name="Takeuchi K."/>
            <person name="Arita M."/>
            <person name="Imose N."/>
            <person name="Musashino K."/>
            <person name="Yuuki H."/>
            <person name="Oshima A."/>
            <person name="Sasaki N."/>
            <person name="Aotsuka S."/>
            <person name="Yoshikawa Y."/>
            <person name="Matsunawa H."/>
            <person name="Ichihara T."/>
            <person name="Shiohata N."/>
            <person name="Sano S."/>
            <person name="Moriya S."/>
            <person name="Momiyama H."/>
            <person name="Satoh N."/>
            <person name="Takami S."/>
            <person name="Terashima Y."/>
            <person name="Suzuki O."/>
            <person name="Nakagawa S."/>
            <person name="Senoh A."/>
            <person name="Mizoguchi H."/>
            <person name="Goto Y."/>
            <person name="Shimizu F."/>
            <person name="Wakebe H."/>
            <person name="Hishigaki H."/>
            <person name="Watanabe T."/>
            <person name="Sugiyama A."/>
            <person name="Takemoto M."/>
            <person name="Kawakami B."/>
            <person name="Yamazaki M."/>
            <person name="Watanabe K."/>
            <person name="Kumagai A."/>
            <person name="Itakura S."/>
            <person name="Fukuzumi Y."/>
            <person name="Fujimori Y."/>
            <person name="Komiyama M."/>
            <person name="Tashiro H."/>
            <person name="Tanigami A."/>
            <person name="Fujiwara T."/>
            <person name="Ono T."/>
            <person name="Yamada K."/>
            <person name="Fujii Y."/>
            <person name="Ozaki K."/>
            <person name="Hirao M."/>
            <person name="Ohmori Y."/>
            <person name="Kawabata A."/>
            <person name="Hikiji T."/>
            <person name="Kobatake N."/>
            <person name="Inagaki H."/>
            <person name="Ikema Y."/>
            <person name="Okamoto S."/>
            <person name="Okitani R."/>
            <person name="Kawakami T."/>
            <person name="Noguchi S."/>
            <person name="Itoh T."/>
            <person name="Shigeta K."/>
            <person name="Senba T."/>
            <person name="Matsumura K."/>
            <person name="Nakajima Y."/>
            <person name="Mizuno T."/>
            <person name="Morinaga M."/>
            <person name="Sasaki M."/>
            <person name="Togashi T."/>
            <person name="Oyama M."/>
            <person name="Hata H."/>
            <person name="Watanabe M."/>
            <person name="Komatsu T."/>
            <person name="Mizushima-Sugano J."/>
            <person name="Satoh T."/>
            <person name="Shirai Y."/>
            <person name="Takahashi Y."/>
            <person name="Nakagawa K."/>
            <person name="Okumura K."/>
            <person name="Nagase T."/>
            <person name="Nomura N."/>
            <person name="Kikuchi H."/>
            <person name="Masuho Y."/>
            <person name="Yamashita R."/>
            <person name="Nakai K."/>
            <person name="Yada T."/>
            <person name="Nakamura Y."/>
            <person name="Ohara O."/>
            <person name="Isogai T."/>
            <person name="Sugano S."/>
        </authorList>
    </citation>
    <scope>NUCLEOTIDE SEQUENCE [LARGE SCALE MRNA] (ISOFORMS 1; 2 AND 3)</scope>
    <source>
        <tissue>Synovium</tissue>
        <tissue>Urinary bladder</tissue>
    </source>
</reference>
<reference key="6">
    <citation type="journal article" date="2005" name="DNA Res.">
        <title>Signal sequence and keyword trap in silico for selection of full-length human cDNAs encoding secretion or membrane proteins from oligo-capped cDNA libraries.</title>
        <authorList>
            <person name="Otsuki T."/>
            <person name="Ota T."/>
            <person name="Nishikawa T."/>
            <person name="Hayashi K."/>
            <person name="Suzuki Y."/>
            <person name="Yamamoto J."/>
            <person name="Wakamatsu A."/>
            <person name="Kimura K."/>
            <person name="Sakamoto K."/>
            <person name="Hatano N."/>
            <person name="Kawai Y."/>
            <person name="Ishii S."/>
            <person name="Saito K."/>
            <person name="Kojima S."/>
            <person name="Sugiyama T."/>
            <person name="Ono T."/>
            <person name="Okano K."/>
            <person name="Yoshikawa Y."/>
            <person name="Aotsuka S."/>
            <person name="Sasaki N."/>
            <person name="Hattori A."/>
            <person name="Okumura K."/>
            <person name="Nagai K."/>
            <person name="Sugano S."/>
            <person name="Isogai T."/>
        </authorList>
    </citation>
    <scope>NUCLEOTIDE SEQUENCE [LARGE SCALE MRNA] (ISOFORM 1)</scope>
</reference>
<reference key="7">
    <citation type="journal article" date="2003" name="Nature">
        <title>The DNA sequence and analysis of human chromosome 14.</title>
        <authorList>
            <person name="Heilig R."/>
            <person name="Eckenberg R."/>
            <person name="Petit J.-L."/>
            <person name="Fonknechten N."/>
            <person name="Da Silva C."/>
            <person name="Cattolico L."/>
            <person name="Levy M."/>
            <person name="Barbe V."/>
            <person name="De Berardinis V."/>
            <person name="Ureta-Vidal A."/>
            <person name="Pelletier E."/>
            <person name="Vico V."/>
            <person name="Anthouard V."/>
            <person name="Rowen L."/>
            <person name="Madan A."/>
            <person name="Qin S."/>
            <person name="Sun H."/>
            <person name="Du H."/>
            <person name="Pepin K."/>
            <person name="Artiguenave F."/>
            <person name="Robert C."/>
            <person name="Cruaud C."/>
            <person name="Bruels T."/>
            <person name="Jaillon O."/>
            <person name="Friedlander L."/>
            <person name="Samson G."/>
            <person name="Brottier P."/>
            <person name="Cure S."/>
            <person name="Segurens B."/>
            <person name="Aniere F."/>
            <person name="Samain S."/>
            <person name="Crespeau H."/>
            <person name="Abbasi N."/>
            <person name="Aiach N."/>
            <person name="Boscus D."/>
            <person name="Dickhoff R."/>
            <person name="Dors M."/>
            <person name="Dubois I."/>
            <person name="Friedman C."/>
            <person name="Gouyvenoux M."/>
            <person name="James R."/>
            <person name="Madan A."/>
            <person name="Mairey-Estrada B."/>
            <person name="Mangenot S."/>
            <person name="Martins N."/>
            <person name="Menard M."/>
            <person name="Oztas S."/>
            <person name="Ratcliffe A."/>
            <person name="Shaffer T."/>
            <person name="Trask B."/>
            <person name="Vacherie B."/>
            <person name="Bellemere C."/>
            <person name="Belser C."/>
            <person name="Besnard-Gonnet M."/>
            <person name="Bartol-Mavel D."/>
            <person name="Boutard M."/>
            <person name="Briez-Silla S."/>
            <person name="Combette S."/>
            <person name="Dufosse-Laurent V."/>
            <person name="Ferron C."/>
            <person name="Lechaplais C."/>
            <person name="Louesse C."/>
            <person name="Muselet D."/>
            <person name="Magdelenat G."/>
            <person name="Pateau E."/>
            <person name="Petit E."/>
            <person name="Sirvain-Trukniewicz P."/>
            <person name="Trybou A."/>
            <person name="Vega-Czarny N."/>
            <person name="Bataille E."/>
            <person name="Bluet E."/>
            <person name="Bordelais I."/>
            <person name="Dubois M."/>
            <person name="Dumont C."/>
            <person name="Guerin T."/>
            <person name="Haffray S."/>
            <person name="Hammadi R."/>
            <person name="Muanga J."/>
            <person name="Pellouin V."/>
            <person name="Robert D."/>
            <person name="Wunderle E."/>
            <person name="Gauguet G."/>
            <person name="Roy A."/>
            <person name="Sainte-Marthe L."/>
            <person name="Verdier J."/>
            <person name="Verdier-Discala C."/>
            <person name="Hillier L.W."/>
            <person name="Fulton L."/>
            <person name="McPherson J."/>
            <person name="Matsuda F."/>
            <person name="Wilson R."/>
            <person name="Scarpelli C."/>
            <person name="Gyapay G."/>
            <person name="Wincker P."/>
            <person name="Saurin W."/>
            <person name="Quetier F."/>
            <person name="Waterston R."/>
            <person name="Hood L."/>
            <person name="Weissenbach J."/>
        </authorList>
    </citation>
    <scope>NUCLEOTIDE SEQUENCE [LARGE SCALE GENOMIC DNA]</scope>
</reference>
<reference key="8">
    <citation type="submission" date="2005-07" db="EMBL/GenBank/DDBJ databases">
        <authorList>
            <person name="Mural R.J."/>
            <person name="Istrail S."/>
            <person name="Sutton G.G."/>
            <person name="Florea L."/>
            <person name="Halpern A.L."/>
            <person name="Mobarry C.M."/>
            <person name="Lippert R."/>
            <person name="Walenz B."/>
            <person name="Shatkay H."/>
            <person name="Dew I."/>
            <person name="Miller J.R."/>
            <person name="Flanigan M.J."/>
            <person name="Edwards N.J."/>
            <person name="Bolanos R."/>
            <person name="Fasulo D."/>
            <person name="Halldorsson B.V."/>
            <person name="Hannenhalli S."/>
            <person name="Turner R."/>
            <person name="Yooseph S."/>
            <person name="Lu F."/>
            <person name="Nusskern D.R."/>
            <person name="Shue B.C."/>
            <person name="Zheng X.H."/>
            <person name="Zhong F."/>
            <person name="Delcher A.L."/>
            <person name="Huson D.H."/>
            <person name="Kravitz S.A."/>
            <person name="Mouchard L."/>
            <person name="Reinert K."/>
            <person name="Remington K.A."/>
            <person name="Clark A.G."/>
            <person name="Waterman M.S."/>
            <person name="Eichler E.E."/>
            <person name="Adams M.D."/>
            <person name="Hunkapiller M.W."/>
            <person name="Myers E.W."/>
            <person name="Venter J.C."/>
        </authorList>
    </citation>
    <scope>NUCLEOTIDE SEQUENCE [LARGE SCALE GENOMIC DNA]</scope>
</reference>
<reference key="9">
    <citation type="journal article" date="2004" name="Genome Res.">
        <title>The status, quality, and expansion of the NIH full-length cDNA project: the Mammalian Gene Collection (MGC).</title>
        <authorList>
            <consortium name="The MGC Project Team"/>
        </authorList>
    </citation>
    <scope>NUCLEOTIDE SEQUENCE [LARGE SCALE MRNA] (ISOFORMS 1 AND 2)</scope>
    <source>
        <tissue>Brain</tissue>
        <tissue>Muscle</tissue>
        <tissue>Placenta</tissue>
        <tissue>Prostate</tissue>
    </source>
</reference>
<reference key="10">
    <citation type="journal article" date="2007" name="BMC Genomics">
        <title>Mapping of transcription start sites of human retina expressed genes.</title>
        <authorList>
            <person name="Roni V."/>
            <person name="Carpio R."/>
            <person name="Wissinger B."/>
        </authorList>
    </citation>
    <scope>NUCLEOTIDE SEQUENCE [LARGE SCALE MRNA] OF 1-171 (ISOFORM 1)</scope>
    <source>
        <tissue>Retina</tissue>
    </source>
</reference>
<reference key="11">
    <citation type="journal article" date="2002" name="J. Biol. Chem.">
        <title>Evidence that the human gene for prostate short-chain dehydrogenase/reductase (PSDR1) encodes a novel retinal reductase (RalR1).</title>
        <authorList>
            <person name="Kedishvili N.Y."/>
            <person name="Chumakova O.V."/>
            <person name="Chetyrkin S.V."/>
            <person name="Belyaeva O.V."/>
            <person name="Lapshina E.A."/>
            <person name="Lin D.W."/>
            <person name="Matsumura M."/>
            <person name="Nelson P.S."/>
        </authorList>
    </citation>
    <scope>IDENTIFICATION AS A RETINAL REDUCTASE</scope>
    <scope>CATALYTIC ACTIVITY</scope>
    <scope>SUBCELLULAR LOCATION</scope>
    <scope>BIOPHYSICOCHEMICAL PROPERTIES</scope>
    <scope>TOPOLOGY</scope>
</reference>
<reference key="12">
    <citation type="journal article" date="2002" name="J. Biol. Chem.">
        <title>Dual-substrate specificity short chain retinol dehydrogenases from the vertebrate retina.</title>
        <authorList>
            <person name="Haeseleer F."/>
            <person name="Jang G.-F."/>
            <person name="Imanishi Y."/>
            <person name="Driessen C.A.G.G."/>
            <person name="Matsumura M."/>
            <person name="Nelson P.S."/>
            <person name="Palczewski K."/>
        </authorList>
    </citation>
    <scope>CATALYTIC ACTIVITY</scope>
    <scope>FUNCTION</scope>
    <scope>SUBSTRATE SPECIFICITY</scope>
    <scope>TOPOLOGY</scope>
</reference>
<reference key="13">
    <citation type="journal article" date="2005" name="Biochemistry">
        <title>Biochemical properties of purified human retinol dehydrogenase 12 (RDH12): catalytic efficiency toward retinoids and C9 aldehydes and effects of cellular retinol-binding protein type I (CRBPI) and cellular retinaldehyde-binding protein (CRALBP) on the oxidation and reduction of retinoids.</title>
        <authorList>
            <person name="Belyaeva O.V."/>
            <person name="Korkina O.V."/>
            <person name="Stetsenko A.V."/>
            <person name="Kim T."/>
            <person name="Nelson P.S."/>
            <person name="Kedishvili N.Y."/>
        </authorList>
    </citation>
    <scope>CAUTION</scope>
    <scope>BIOPHYSICOCHEMICAL PROPERTIES</scope>
</reference>
<reference key="14">
    <citation type="journal article" date="2009" name="Science">
        <title>Lysine acetylation targets protein complexes and co-regulates major cellular functions.</title>
        <authorList>
            <person name="Choudhary C."/>
            <person name="Kumar C."/>
            <person name="Gnad F."/>
            <person name="Nielsen M.L."/>
            <person name="Rehman M."/>
            <person name="Walther T.C."/>
            <person name="Olsen J.V."/>
            <person name="Mann M."/>
        </authorList>
    </citation>
    <scope>ACETYLATION [LARGE SCALE ANALYSIS] AT LYS-112</scope>
    <scope>IDENTIFICATION BY MASS SPECTROMETRY [LARGE SCALE ANALYSIS]</scope>
</reference>
<reference key="15">
    <citation type="journal article" date="2011" name="BMC Syst. Biol.">
        <title>Initial characterization of the human central proteome.</title>
        <authorList>
            <person name="Burkard T.R."/>
            <person name="Planyavsky M."/>
            <person name="Kaupe I."/>
            <person name="Breitwieser F.P."/>
            <person name="Buerckstuemmer T."/>
            <person name="Bennett K.L."/>
            <person name="Superti-Furga G."/>
            <person name="Colinge J."/>
        </authorList>
    </citation>
    <scope>IDENTIFICATION BY MASS SPECTROMETRY [LARGE SCALE ANALYSIS]</scope>
</reference>
<reference key="16">
    <citation type="journal article" date="2014" name="Hum. Mol. Genet.">
        <title>New syndrome with retinitis pigmentosa is caused by nonsense mutations in retinol dehydrogenase RDH11.</title>
        <authorList>
            <person name="Xie Y.A."/>
            <person name="Lee W."/>
            <person name="Cai C."/>
            <person name="Gambin T."/>
            <person name="Noupuu K."/>
            <person name="Sujirakul T."/>
            <person name="Ayuso C."/>
            <person name="Jhangiani S."/>
            <person name="Muzny D."/>
            <person name="Boerwinkle E."/>
            <person name="Gibbs R."/>
            <person name="Greenstein V.C."/>
            <person name="Lupski J.R."/>
            <person name="Tsang S.H."/>
            <person name="Allikmets R."/>
        </authorList>
    </citation>
    <scope>INVOLVEMENT IN RDJCSS</scope>
</reference>
<reference key="17">
    <citation type="journal article" date="2014" name="J. Proteomics">
        <title>An enzyme assisted RP-RPLC approach for in-depth analysis of human liver phosphoproteome.</title>
        <authorList>
            <person name="Bian Y."/>
            <person name="Song C."/>
            <person name="Cheng K."/>
            <person name="Dong M."/>
            <person name="Wang F."/>
            <person name="Huang J."/>
            <person name="Sun D."/>
            <person name="Wang L."/>
            <person name="Ye M."/>
            <person name="Zou H."/>
        </authorList>
    </citation>
    <scope>IDENTIFICATION BY MASS SPECTROMETRY [LARGE SCALE ANALYSIS]</scope>
    <source>
        <tissue>Liver</tissue>
    </source>
</reference>
<reference key="18">
    <citation type="journal article" date="2015" name="Proteomics">
        <title>N-terminome analysis of the human mitochondrial proteome.</title>
        <authorList>
            <person name="Vaca Jacome A.S."/>
            <person name="Rabilloud T."/>
            <person name="Schaeffer-Reiss C."/>
            <person name="Rompais M."/>
            <person name="Ayoub D."/>
            <person name="Lane L."/>
            <person name="Bairoch A."/>
            <person name="Van Dorsselaer A."/>
            <person name="Carapito C."/>
        </authorList>
    </citation>
    <scope>IDENTIFICATION BY MASS SPECTROMETRY [LARGE SCALE ANALYSIS]</scope>
</reference>
<reference key="19">
    <citation type="journal article" date="2018" name="Nutr. Metab.">
        <title>The interaction of selenoprotein F (SELENOF) with retinol dehydrogenase 11 (RDH11) implied a role of SELENOF in vitamin A metabolism.</title>
        <authorList>
            <person name="Tian J."/>
            <person name="Liu J."/>
            <person name="Li J."/>
            <person name="Zheng J."/>
            <person name="Chen L."/>
            <person name="Wang Y."/>
            <person name="Liu Q."/>
            <person name="Ni J."/>
        </authorList>
    </citation>
    <scope>INTERACTION WITH SELENOF</scope>
    <scope>ACTIVITY REGULATION</scope>
    <scope>CATALYTIC ACTIVITY</scope>
    <scope>FUNCTION</scope>
</reference>
<organism>
    <name type="scientific">Homo sapiens</name>
    <name type="common">Human</name>
    <dbReference type="NCBI Taxonomy" id="9606"/>
    <lineage>
        <taxon>Eukaryota</taxon>
        <taxon>Metazoa</taxon>
        <taxon>Chordata</taxon>
        <taxon>Craniata</taxon>
        <taxon>Vertebrata</taxon>
        <taxon>Euteleostomi</taxon>
        <taxon>Mammalia</taxon>
        <taxon>Eutheria</taxon>
        <taxon>Euarchontoglires</taxon>
        <taxon>Primates</taxon>
        <taxon>Haplorrhini</taxon>
        <taxon>Catarrhini</taxon>
        <taxon>Hominidae</taxon>
        <taxon>Homo</taxon>
    </lineage>
</organism>
<feature type="chain" id="PRO_0000054763" description="Retinol dehydrogenase 11">
    <location>
        <begin position="1"/>
        <end position="318"/>
    </location>
</feature>
<feature type="transmembrane region" description="Helical; Signal-anchor for type II membrane protein" evidence="3 4">
    <location>
        <begin position="1"/>
        <end position="21"/>
    </location>
</feature>
<feature type="topological domain" description="Cytoplasmic" evidence="3 4">
    <location>
        <begin position="22"/>
        <end position="318"/>
    </location>
</feature>
<feature type="active site" description="Proton acceptor" evidence="1">
    <location>
        <position position="202"/>
    </location>
</feature>
<feature type="binding site" evidence="1">
    <location>
        <begin position="48"/>
        <end position="54"/>
    </location>
    <ligand>
        <name>NADP(+)</name>
        <dbReference type="ChEBI" id="CHEBI:58349"/>
    </ligand>
</feature>
<feature type="binding site" evidence="1">
    <location>
        <position position="177"/>
    </location>
    <ligand>
        <name>substrate</name>
    </ligand>
</feature>
<feature type="modified residue" description="N6-acetyllysine" evidence="13">
    <location>
        <position position="112"/>
    </location>
</feature>
<feature type="splice variant" id="VSP_008159" description="In isoform 2." evidence="10 11">
    <location>
        <begin position="52"/>
        <end position="64"/>
    </location>
</feature>
<feature type="splice variant" id="VSP_046403" description="In isoform 3." evidence="10">
    <location>
        <begin position="152"/>
        <end position="221"/>
    </location>
</feature>
<feature type="sequence conflict" description="In Ref. 9; AAH51291." evidence="12" ref="9">
    <original>S</original>
    <variation>F</variation>
    <location>
        <position position="176"/>
    </location>
</feature>
<feature type="sequence conflict" description="In Ref. 1; AAF89632." evidence="12" ref="1">
    <original>A</original>
    <variation>V</variation>
    <location>
        <position position="294"/>
    </location>
</feature>
<feature type="sequence conflict" description="In Ref. 9; AAH26274." evidence="12" ref="9">
    <original>P</original>
    <variation>S</variation>
    <location>
        <position position="316"/>
    </location>
</feature>
<keyword id="KW-0007">Acetylation</keyword>
<keyword id="KW-0025">Alternative splicing</keyword>
<keyword id="KW-0898">Cataract</keyword>
<keyword id="KW-0242">Dwarfism</keyword>
<keyword id="KW-0256">Endoplasmic reticulum</keyword>
<keyword id="KW-0443">Lipid metabolism</keyword>
<keyword id="KW-0472">Membrane</keyword>
<keyword id="KW-0521">NADP</keyword>
<keyword id="KW-0560">Oxidoreductase</keyword>
<keyword id="KW-1267">Proteomics identification</keyword>
<keyword id="KW-1185">Reference proteome</keyword>
<keyword id="KW-0735">Signal-anchor</keyword>
<keyword id="KW-0812">Transmembrane</keyword>
<keyword id="KW-1133">Transmembrane helix</keyword>
<accession>Q8TC12</accession>
<accession>A6NDK3</accession>
<accession>A8K062</accession>
<accession>B2RB26</accession>
<accession>B4DDW0</accession>
<accession>Q0QD40</accession>
<accession>Q6IAH5</accession>
<accession>Q9NRW0</accession>
<accession>Q9Y391</accession>
<dbReference type="EC" id="1.1.1.300" evidence="3 4"/>
<dbReference type="EMBL" id="AF167438">
    <property type="protein sequence ID" value="AAF89632.1"/>
    <property type="molecule type" value="mRNA"/>
</dbReference>
<dbReference type="EMBL" id="AF395068">
    <property type="protein sequence ID" value="AAK72049.1"/>
    <property type="molecule type" value="mRNA"/>
</dbReference>
<dbReference type="EMBL" id="AF151840">
    <property type="protein sequence ID" value="AAD34077.1"/>
    <property type="molecule type" value="mRNA"/>
</dbReference>
<dbReference type="EMBL" id="CR457180">
    <property type="protein sequence ID" value="CAG33461.1"/>
    <property type="molecule type" value="mRNA"/>
</dbReference>
<dbReference type="EMBL" id="AK289427">
    <property type="protein sequence ID" value="BAF82116.1"/>
    <property type="molecule type" value="mRNA"/>
</dbReference>
<dbReference type="EMBL" id="AK293355">
    <property type="protein sequence ID" value="BAG56871.1"/>
    <property type="molecule type" value="mRNA"/>
</dbReference>
<dbReference type="EMBL" id="AK314465">
    <property type="protein sequence ID" value="BAG37073.1"/>
    <property type="molecule type" value="mRNA"/>
</dbReference>
<dbReference type="EMBL" id="AK074749">
    <property type="protein sequence ID" value="BAG51997.1"/>
    <property type="molecule type" value="mRNA"/>
</dbReference>
<dbReference type="EMBL" id="AL049779">
    <property type="status" value="NOT_ANNOTATED_CDS"/>
    <property type="molecule type" value="Genomic_DNA"/>
</dbReference>
<dbReference type="EMBL" id="CH471061">
    <property type="protein sequence ID" value="EAW80950.1"/>
    <property type="molecule type" value="Genomic_DNA"/>
</dbReference>
<dbReference type="EMBL" id="BC000112">
    <property type="protein sequence ID" value="AAH00112.1"/>
    <property type="molecule type" value="mRNA"/>
</dbReference>
<dbReference type="EMBL" id="BC011727">
    <property type="protein sequence ID" value="AAH11727.1"/>
    <property type="molecule type" value="mRNA"/>
</dbReference>
<dbReference type="EMBL" id="BC026274">
    <property type="protein sequence ID" value="AAH26274.1"/>
    <property type="molecule type" value="mRNA"/>
</dbReference>
<dbReference type="EMBL" id="BC037302">
    <property type="protein sequence ID" value="AAH37302.1"/>
    <property type="molecule type" value="mRNA"/>
</dbReference>
<dbReference type="EMBL" id="BC051291">
    <property type="protein sequence ID" value="AAH51291.1"/>
    <property type="molecule type" value="mRNA"/>
</dbReference>
<dbReference type="EMBL" id="DQ426886">
    <property type="protein sequence ID" value="ABD90542.1"/>
    <property type="molecule type" value="mRNA"/>
</dbReference>
<dbReference type="CCDS" id="CCDS32104.1">
    <molecule id="Q8TC12-1"/>
</dbReference>
<dbReference type="CCDS" id="CCDS58326.1">
    <molecule id="Q8TC12-3"/>
</dbReference>
<dbReference type="RefSeq" id="NP_001239579.1">
    <molecule id="Q8TC12-3"/>
    <property type="nucleotide sequence ID" value="NM_001252650.2"/>
</dbReference>
<dbReference type="RefSeq" id="NP_057110.3">
    <molecule id="Q8TC12-1"/>
    <property type="nucleotide sequence ID" value="NM_016026.3"/>
</dbReference>
<dbReference type="SMR" id="Q8TC12"/>
<dbReference type="BioGRID" id="119298">
    <property type="interactions" value="173"/>
</dbReference>
<dbReference type="FunCoup" id="Q8TC12">
    <property type="interactions" value="528"/>
</dbReference>
<dbReference type="IntAct" id="Q8TC12">
    <property type="interactions" value="76"/>
</dbReference>
<dbReference type="MINT" id="Q8TC12"/>
<dbReference type="STRING" id="9606.ENSP00000370750"/>
<dbReference type="DrugBank" id="DB00162">
    <property type="generic name" value="Vitamin A"/>
</dbReference>
<dbReference type="SwissLipids" id="SLP:000001785"/>
<dbReference type="CarbonylDB" id="Q8TC12"/>
<dbReference type="GlyGen" id="Q8TC12">
    <property type="glycosylation" value="2 sites, 1 N-linked glycan (1 site), 1 O-linked glycan (1 site)"/>
</dbReference>
<dbReference type="iPTMnet" id="Q8TC12"/>
<dbReference type="PhosphoSitePlus" id="Q8TC12"/>
<dbReference type="SwissPalm" id="Q8TC12"/>
<dbReference type="BioMuta" id="RDH11"/>
<dbReference type="DMDM" id="34395789"/>
<dbReference type="jPOST" id="Q8TC12"/>
<dbReference type="MassIVE" id="Q8TC12"/>
<dbReference type="PaxDb" id="9606-ENSP00000370750"/>
<dbReference type="PeptideAtlas" id="Q8TC12"/>
<dbReference type="ProteomicsDB" id="3897"/>
<dbReference type="ProteomicsDB" id="74069">
    <molecule id="Q8TC12-1"/>
</dbReference>
<dbReference type="ProteomicsDB" id="74070">
    <molecule id="Q8TC12-2"/>
</dbReference>
<dbReference type="Pumba" id="Q8TC12"/>
<dbReference type="Antibodypedia" id="12201">
    <property type="antibodies" value="241 antibodies from 29 providers"/>
</dbReference>
<dbReference type="DNASU" id="51109"/>
<dbReference type="Ensembl" id="ENST00000381346.9">
    <molecule id="Q8TC12-1"/>
    <property type="protein sequence ID" value="ENSP00000370750.4"/>
    <property type="gene ID" value="ENSG00000072042.13"/>
</dbReference>
<dbReference type="Ensembl" id="ENST00000428130.6">
    <molecule id="Q8TC12-3"/>
    <property type="protein sequence ID" value="ENSP00000416395.2"/>
    <property type="gene ID" value="ENSG00000072042.13"/>
</dbReference>
<dbReference type="Ensembl" id="ENST00000553384.5">
    <molecule id="Q8TC12-2"/>
    <property type="protein sequence ID" value="ENSP00000452079.1"/>
    <property type="gene ID" value="ENSG00000072042.13"/>
</dbReference>
<dbReference type="GeneID" id="51109"/>
<dbReference type="KEGG" id="hsa:51109"/>
<dbReference type="MANE-Select" id="ENST00000381346.9">
    <property type="protein sequence ID" value="ENSP00000370750.4"/>
    <property type="RefSeq nucleotide sequence ID" value="NM_016026.4"/>
    <property type="RefSeq protein sequence ID" value="NP_057110.3"/>
</dbReference>
<dbReference type="UCSC" id="uc001xjv.6">
    <molecule id="Q8TC12-1"/>
    <property type="organism name" value="human"/>
</dbReference>
<dbReference type="AGR" id="HGNC:17964"/>
<dbReference type="CTD" id="51109"/>
<dbReference type="DisGeNET" id="51109"/>
<dbReference type="GeneCards" id="RDH11"/>
<dbReference type="HGNC" id="HGNC:17964">
    <property type="gene designation" value="RDH11"/>
</dbReference>
<dbReference type="HPA" id="ENSG00000072042">
    <property type="expression patterns" value="Tissue enhanced (prostate)"/>
</dbReference>
<dbReference type="MalaCards" id="RDH11"/>
<dbReference type="MIM" id="607849">
    <property type="type" value="gene"/>
</dbReference>
<dbReference type="MIM" id="616108">
    <property type="type" value="phenotype"/>
</dbReference>
<dbReference type="neXtProt" id="NX_Q8TC12"/>
<dbReference type="OpenTargets" id="ENSG00000072042"/>
<dbReference type="Orphanet" id="436245">
    <property type="disease" value="Retinitis pigmentosa-juvenile cataract-short stature-intellectual disability syndrome"/>
</dbReference>
<dbReference type="PharmGKB" id="PA134981588"/>
<dbReference type="VEuPathDB" id="HostDB:ENSG00000072042"/>
<dbReference type="eggNOG" id="KOG1208">
    <property type="taxonomic scope" value="Eukaryota"/>
</dbReference>
<dbReference type="GeneTree" id="ENSGT00940000158191"/>
<dbReference type="InParanoid" id="Q8TC12"/>
<dbReference type="OMA" id="APHIRRY"/>
<dbReference type="OrthoDB" id="191139at2759"/>
<dbReference type="PAN-GO" id="Q8TC12">
    <property type="GO annotations" value="0 GO annotations based on evolutionary models"/>
</dbReference>
<dbReference type="PhylomeDB" id="Q8TC12"/>
<dbReference type="TreeFam" id="TF105429"/>
<dbReference type="BioCyc" id="MetaCyc:HS01050-MONOMER"/>
<dbReference type="BRENDA" id="1.1.1.300">
    <property type="organism ID" value="2681"/>
</dbReference>
<dbReference type="PathwayCommons" id="Q8TC12"/>
<dbReference type="Reactome" id="R-HSA-2453902">
    <property type="pathway name" value="The canonical retinoid cycle in rods (twilight vision)"/>
</dbReference>
<dbReference type="Reactome" id="R-HSA-5365859">
    <property type="pathway name" value="RA biosynthesis pathway"/>
</dbReference>
<dbReference type="Reactome" id="R-HSA-975634">
    <property type="pathway name" value="Retinoid metabolism and transport"/>
</dbReference>
<dbReference type="SABIO-RK" id="Q8TC12"/>
<dbReference type="SignaLink" id="Q8TC12"/>
<dbReference type="UniPathway" id="UPA00912"/>
<dbReference type="BioGRID-ORCS" id="51109">
    <property type="hits" value="14 hits in 1156 CRISPR screens"/>
</dbReference>
<dbReference type="ChiTaRS" id="RDH11">
    <property type="organism name" value="human"/>
</dbReference>
<dbReference type="GeneWiki" id="RDH11"/>
<dbReference type="GenomeRNAi" id="51109"/>
<dbReference type="Pharos" id="Q8TC12">
    <property type="development level" value="Tbio"/>
</dbReference>
<dbReference type="PRO" id="PR:Q8TC12"/>
<dbReference type="Proteomes" id="UP000005640">
    <property type="component" value="Chromosome 14"/>
</dbReference>
<dbReference type="RNAct" id="Q8TC12">
    <property type="molecule type" value="protein"/>
</dbReference>
<dbReference type="Bgee" id="ENSG00000072042">
    <property type="expression patterns" value="Expressed in pigmented layer of retina and 209 other cell types or tissues"/>
</dbReference>
<dbReference type="ExpressionAtlas" id="Q8TC12">
    <property type="expression patterns" value="baseline and differential"/>
</dbReference>
<dbReference type="GO" id="GO:0005789">
    <property type="term" value="C:endoplasmic reticulum membrane"/>
    <property type="evidence" value="ECO:0000314"/>
    <property type="project" value="UniProtKB"/>
</dbReference>
<dbReference type="GO" id="GO:0001917">
    <property type="term" value="C:photoreceptor inner segment"/>
    <property type="evidence" value="ECO:0007669"/>
    <property type="project" value="Ensembl"/>
</dbReference>
<dbReference type="GO" id="GO:0102354">
    <property type="term" value="F:11-cis-retinol dehydrogenase activity"/>
    <property type="evidence" value="ECO:0007669"/>
    <property type="project" value="RHEA"/>
</dbReference>
<dbReference type="GO" id="GO:0033721">
    <property type="term" value="F:aldehyde dehydrogenase (NADP+) activity"/>
    <property type="evidence" value="ECO:0007669"/>
    <property type="project" value="Ensembl"/>
</dbReference>
<dbReference type="GO" id="GO:0004745">
    <property type="term" value="F:all-trans-retinol dehydrogenase (NAD+) activity"/>
    <property type="evidence" value="ECO:0000250"/>
    <property type="project" value="UniProtKB"/>
</dbReference>
<dbReference type="GO" id="GO:0052650">
    <property type="term" value="F:all-trans-retinol dehydrogenase (NADP+) activity"/>
    <property type="evidence" value="ECO:0000314"/>
    <property type="project" value="UniProtKB"/>
</dbReference>
<dbReference type="GO" id="GO:0016616">
    <property type="term" value="F:oxidoreductase activity, acting on the CH-OH group of donors, NAD or NADP as acceptor"/>
    <property type="evidence" value="ECO:0000304"/>
    <property type="project" value="Reactome"/>
</dbReference>
<dbReference type="GO" id="GO:0110095">
    <property type="term" value="P:cellular detoxification of aldehyde"/>
    <property type="evidence" value="ECO:0000314"/>
    <property type="project" value="UniProtKB"/>
</dbReference>
<dbReference type="GO" id="GO:0042574">
    <property type="term" value="P:retinal metabolic process"/>
    <property type="evidence" value="ECO:0000314"/>
    <property type="project" value="MGI"/>
</dbReference>
<dbReference type="GO" id="GO:0001523">
    <property type="term" value="P:retinoid metabolic process"/>
    <property type="evidence" value="ECO:0000314"/>
    <property type="project" value="UniProtKB"/>
</dbReference>
<dbReference type="GO" id="GO:0042572">
    <property type="term" value="P:retinol metabolic process"/>
    <property type="evidence" value="ECO:0000250"/>
    <property type="project" value="UniProtKB"/>
</dbReference>
<dbReference type="GO" id="GO:0007601">
    <property type="term" value="P:visual perception"/>
    <property type="evidence" value="ECO:0007669"/>
    <property type="project" value="Ensembl"/>
</dbReference>
<dbReference type="FunFam" id="3.40.50.720:FF:000145">
    <property type="entry name" value="Retinol dehydrogenase 12"/>
    <property type="match status" value="1"/>
</dbReference>
<dbReference type="Gene3D" id="3.40.50.720">
    <property type="entry name" value="NAD(P)-binding Rossmann-like Domain"/>
    <property type="match status" value="1"/>
</dbReference>
<dbReference type="InterPro" id="IPR036291">
    <property type="entry name" value="NAD(P)-bd_dom_sf"/>
</dbReference>
<dbReference type="InterPro" id="IPR002347">
    <property type="entry name" value="SDR_fam"/>
</dbReference>
<dbReference type="NCBIfam" id="NF004846">
    <property type="entry name" value="PRK06197.1"/>
    <property type="match status" value="1"/>
</dbReference>
<dbReference type="PANTHER" id="PTHR43157">
    <property type="entry name" value="PHOSPHATIDYLINOSITOL-GLYCAN BIOSYNTHESIS CLASS F PROTEIN-RELATED"/>
    <property type="match status" value="1"/>
</dbReference>
<dbReference type="PANTHER" id="PTHR43157:SF70">
    <property type="entry name" value="RETINOL DEHYDROGENASE 11"/>
    <property type="match status" value="1"/>
</dbReference>
<dbReference type="Pfam" id="PF00106">
    <property type="entry name" value="adh_short"/>
    <property type="match status" value="1"/>
</dbReference>
<dbReference type="PRINTS" id="PR00081">
    <property type="entry name" value="GDHRDH"/>
</dbReference>
<dbReference type="PRINTS" id="PR00080">
    <property type="entry name" value="SDRFAMILY"/>
</dbReference>
<dbReference type="SUPFAM" id="SSF51735">
    <property type="entry name" value="NAD(P)-binding Rossmann-fold domains"/>
    <property type="match status" value="1"/>
</dbReference>
<gene>
    <name type="primary">RDH11</name>
    <name type="synonym">ARSDR1</name>
    <name type="synonym">PSDR1</name>
    <name type="synonym">SDR7C1</name>
    <name type="ORF">CGI-82</name>
</gene>
<evidence type="ECO:0000250" key="1"/>
<evidence type="ECO:0000269" key="2">
    <source>
    </source>
</evidence>
<evidence type="ECO:0000269" key="3">
    <source>
    </source>
</evidence>
<evidence type="ECO:0000269" key="4">
    <source>
    </source>
</evidence>
<evidence type="ECO:0000269" key="5">
    <source>
    </source>
</evidence>
<evidence type="ECO:0000269" key="6">
    <source>
    </source>
</evidence>
<evidence type="ECO:0000269" key="7">
    <source>
    </source>
</evidence>
<evidence type="ECO:0000303" key="8">
    <source>
    </source>
</evidence>
<evidence type="ECO:0000303" key="9">
    <source>
    </source>
</evidence>
<evidence type="ECO:0000303" key="10">
    <source>
    </source>
</evidence>
<evidence type="ECO:0000303" key="11">
    <source>
    </source>
</evidence>
<evidence type="ECO:0000305" key="12"/>
<evidence type="ECO:0007744" key="13">
    <source>
    </source>
</evidence>
<sequence length="318" mass="35386">MVELMFPLLLLLLPFLLYMAAPQIRKMLSSGVCTSTVQLPGKVVVVTGANTGIGKETAKELAQRGARVYLACRDVEKGELVAKEIQTTTGNQQVLVRKLDLSDTKSIRAFAKGFLAEEKHLHVLINNAGVMMCPYSKTADGFEMHIGVNHLGHFLLTHLLLEKLKESAPSRIVNVSSLAHHLGRIHFHNLQGEKFYNAGLAYCHSKLANILFTQELARRLKGSGVTTYSVHPGTVQSELVRHSSFMRWMWWLFSFFIKTPQQGAQTSLHCALTEGLEILSGNHFSDCHVAWVSAQARNETIARRLWDVSCDLLGLPID</sequence>
<name>RDH11_HUMAN</name>
<protein>
    <recommendedName>
        <fullName>Retinol dehydrogenase 11</fullName>
        <ecNumber evidence="3 4">1.1.1.300</ecNumber>
    </recommendedName>
    <alternativeName>
        <fullName evidence="8">Androgen-regulated short-chain dehydrogenase/reductase 1</fullName>
    </alternativeName>
    <alternativeName>
        <fullName>HCV core-binding protein HCBP12</fullName>
    </alternativeName>
    <alternativeName>
        <fullName>Prostate short-chain dehydrogenase/reductase 1</fullName>
    </alternativeName>
    <alternativeName>
        <fullName evidence="9">Retinal reductase 1</fullName>
        <shortName evidence="9">RalR1</shortName>
    </alternativeName>
    <alternativeName>
        <fullName>Short chain dehydrogenase/reductase family 7C member 1</fullName>
    </alternativeName>
</protein>